<evidence type="ECO:0000255" key="1">
    <source>
        <dbReference type="HAMAP-Rule" id="MF_01173"/>
    </source>
</evidence>
<reference key="1">
    <citation type="journal article" date="2009" name="BMC Genomics">
        <title>Pseudogene accumulation in the evolutionary histories of Salmonella enterica serovars Paratyphi A and Typhi.</title>
        <authorList>
            <person name="Holt K.E."/>
            <person name="Thomson N.R."/>
            <person name="Wain J."/>
            <person name="Langridge G.C."/>
            <person name="Hasan R."/>
            <person name="Bhutta Z.A."/>
            <person name="Quail M.A."/>
            <person name="Norbertczak H."/>
            <person name="Walker D."/>
            <person name="Simmonds M."/>
            <person name="White B."/>
            <person name="Bason N."/>
            <person name="Mungall K."/>
            <person name="Dougan G."/>
            <person name="Parkhill J."/>
        </authorList>
    </citation>
    <scope>NUCLEOTIDE SEQUENCE [LARGE SCALE GENOMIC DNA]</scope>
    <source>
        <strain>AKU_12601</strain>
    </source>
</reference>
<name>ASTC_SALPK</name>
<gene>
    <name evidence="1" type="primary">astC</name>
    <name evidence="1" type="synonym">argM</name>
    <name type="ordered locus">SSPA1432</name>
</gene>
<feature type="chain" id="PRO_1000164397" description="Succinylornithine transaminase">
    <location>
        <begin position="1"/>
        <end position="408"/>
    </location>
</feature>
<feature type="modified residue" description="N6-(pyridoxal phosphate)lysine" evidence="1">
    <location>
        <position position="252"/>
    </location>
</feature>
<proteinExistence type="inferred from homology"/>
<organism>
    <name type="scientific">Salmonella paratyphi A (strain AKU_12601)</name>
    <dbReference type="NCBI Taxonomy" id="554290"/>
    <lineage>
        <taxon>Bacteria</taxon>
        <taxon>Pseudomonadati</taxon>
        <taxon>Pseudomonadota</taxon>
        <taxon>Gammaproteobacteria</taxon>
        <taxon>Enterobacterales</taxon>
        <taxon>Enterobacteriaceae</taxon>
        <taxon>Salmonella</taxon>
    </lineage>
</organism>
<dbReference type="EC" id="2.6.1.81" evidence="1"/>
<dbReference type="EMBL" id="FM200053">
    <property type="protein sequence ID" value="CAR59611.1"/>
    <property type="molecule type" value="Genomic_DNA"/>
</dbReference>
<dbReference type="RefSeq" id="WP_000059519.1">
    <property type="nucleotide sequence ID" value="NC_011147.1"/>
</dbReference>
<dbReference type="SMR" id="B5BA72"/>
<dbReference type="KEGG" id="sek:SSPA1432"/>
<dbReference type="HOGENOM" id="CLU_016922_10_1_6"/>
<dbReference type="UniPathway" id="UPA00185">
    <property type="reaction ID" value="UER00281"/>
</dbReference>
<dbReference type="Proteomes" id="UP000001869">
    <property type="component" value="Chromosome"/>
</dbReference>
<dbReference type="GO" id="GO:0042802">
    <property type="term" value="F:identical protein binding"/>
    <property type="evidence" value="ECO:0007669"/>
    <property type="project" value="TreeGrafter"/>
</dbReference>
<dbReference type="GO" id="GO:0030170">
    <property type="term" value="F:pyridoxal phosphate binding"/>
    <property type="evidence" value="ECO:0007669"/>
    <property type="project" value="UniProtKB-UniRule"/>
</dbReference>
<dbReference type="GO" id="GO:0043825">
    <property type="term" value="F:succinylornithine transaminase activity"/>
    <property type="evidence" value="ECO:0007669"/>
    <property type="project" value="UniProtKB-EC"/>
</dbReference>
<dbReference type="GO" id="GO:1901607">
    <property type="term" value="P:alpha-amino acid biosynthetic process"/>
    <property type="evidence" value="ECO:0007669"/>
    <property type="project" value="UniProtKB-ARBA"/>
</dbReference>
<dbReference type="GO" id="GO:0019544">
    <property type="term" value="P:arginine catabolic process to glutamate"/>
    <property type="evidence" value="ECO:0007669"/>
    <property type="project" value="UniProtKB-UniRule"/>
</dbReference>
<dbReference type="GO" id="GO:0019545">
    <property type="term" value="P:arginine catabolic process to succinate"/>
    <property type="evidence" value="ECO:0007669"/>
    <property type="project" value="UniProtKB-UniRule"/>
</dbReference>
<dbReference type="GO" id="GO:0006593">
    <property type="term" value="P:ornithine catabolic process"/>
    <property type="evidence" value="ECO:0007669"/>
    <property type="project" value="InterPro"/>
</dbReference>
<dbReference type="CDD" id="cd00610">
    <property type="entry name" value="OAT_like"/>
    <property type="match status" value="1"/>
</dbReference>
<dbReference type="FunFam" id="3.40.640.10:FF:000004">
    <property type="entry name" value="Acetylornithine aminotransferase"/>
    <property type="match status" value="1"/>
</dbReference>
<dbReference type="Gene3D" id="3.90.1150.10">
    <property type="entry name" value="Aspartate Aminotransferase, domain 1"/>
    <property type="match status" value="1"/>
</dbReference>
<dbReference type="Gene3D" id="3.40.640.10">
    <property type="entry name" value="Type I PLP-dependent aspartate aminotransferase-like (Major domain)"/>
    <property type="match status" value="1"/>
</dbReference>
<dbReference type="HAMAP" id="MF_01107">
    <property type="entry name" value="ArgD_aminotrans_3"/>
    <property type="match status" value="1"/>
</dbReference>
<dbReference type="HAMAP" id="MF_01173">
    <property type="entry name" value="AstC_aminotrans_3"/>
    <property type="match status" value="1"/>
</dbReference>
<dbReference type="InterPro" id="IPR017652">
    <property type="entry name" value="Ac/SucOrn_transaminase_bac"/>
</dbReference>
<dbReference type="InterPro" id="IPR004636">
    <property type="entry name" value="AcOrn/SuccOrn_fam"/>
</dbReference>
<dbReference type="InterPro" id="IPR005814">
    <property type="entry name" value="Aminotrans_3"/>
</dbReference>
<dbReference type="InterPro" id="IPR049704">
    <property type="entry name" value="Aminotrans_3_PPA_site"/>
</dbReference>
<dbReference type="InterPro" id="IPR050103">
    <property type="entry name" value="Class-III_PLP-dep_AT"/>
</dbReference>
<dbReference type="InterPro" id="IPR015424">
    <property type="entry name" value="PyrdxlP-dep_Trfase"/>
</dbReference>
<dbReference type="InterPro" id="IPR015421">
    <property type="entry name" value="PyrdxlP-dep_Trfase_major"/>
</dbReference>
<dbReference type="InterPro" id="IPR015422">
    <property type="entry name" value="PyrdxlP-dep_Trfase_small"/>
</dbReference>
<dbReference type="InterPro" id="IPR001763">
    <property type="entry name" value="Rhodanese-like_dom"/>
</dbReference>
<dbReference type="InterPro" id="IPR026330">
    <property type="entry name" value="SOAT"/>
</dbReference>
<dbReference type="NCBIfam" id="TIGR03246">
    <property type="entry name" value="arg_catab_astC"/>
    <property type="match status" value="1"/>
</dbReference>
<dbReference type="NCBIfam" id="TIGR00707">
    <property type="entry name" value="argD"/>
    <property type="match status" value="1"/>
</dbReference>
<dbReference type="NCBIfam" id="NF002325">
    <property type="entry name" value="PRK01278.1"/>
    <property type="match status" value="1"/>
</dbReference>
<dbReference type="NCBIfam" id="NF003468">
    <property type="entry name" value="PRK05093.1"/>
    <property type="match status" value="1"/>
</dbReference>
<dbReference type="NCBIfam" id="NF009047">
    <property type="entry name" value="PRK12381.1"/>
    <property type="match status" value="1"/>
</dbReference>
<dbReference type="PANTHER" id="PTHR11986">
    <property type="entry name" value="AMINOTRANSFERASE CLASS III"/>
    <property type="match status" value="1"/>
</dbReference>
<dbReference type="PANTHER" id="PTHR11986:SF113">
    <property type="entry name" value="SUCCINYLORNITHINE TRANSAMINASE"/>
    <property type="match status" value="1"/>
</dbReference>
<dbReference type="Pfam" id="PF00202">
    <property type="entry name" value="Aminotran_3"/>
    <property type="match status" value="1"/>
</dbReference>
<dbReference type="PIRSF" id="PIRSF000521">
    <property type="entry name" value="Transaminase_4ab_Lys_Orn"/>
    <property type="match status" value="1"/>
</dbReference>
<dbReference type="SUPFAM" id="SSF53383">
    <property type="entry name" value="PLP-dependent transferases"/>
    <property type="match status" value="1"/>
</dbReference>
<dbReference type="PROSITE" id="PS00600">
    <property type="entry name" value="AA_TRANSFER_CLASS_3"/>
    <property type="match status" value="1"/>
</dbReference>
<accession>B5BA72</accession>
<keyword id="KW-0032">Aminotransferase</keyword>
<keyword id="KW-0056">Arginine metabolism</keyword>
<keyword id="KW-0663">Pyridoxal phosphate</keyword>
<keyword id="KW-0808">Transferase</keyword>
<protein>
    <recommendedName>
        <fullName evidence="1">Succinylornithine transaminase</fullName>
        <ecNumber evidence="1">2.6.1.81</ecNumber>
    </recommendedName>
    <alternativeName>
        <fullName evidence="1">Succinylornithine aminotransferase</fullName>
    </alternativeName>
</protein>
<comment type="function">
    <text evidence="1">Catalyzes the transamination of N(2)-succinylornithine and alpha-ketoglutarate into N(2)-succinylglutamate semialdehyde and glutamate. Can also act as an acetylornithine aminotransferase.</text>
</comment>
<comment type="catalytic activity">
    <reaction evidence="1">
        <text>N(2)-succinyl-L-ornithine + 2-oxoglutarate = N-succinyl-L-glutamate 5-semialdehyde + L-glutamate</text>
        <dbReference type="Rhea" id="RHEA:16953"/>
        <dbReference type="ChEBI" id="CHEBI:16810"/>
        <dbReference type="ChEBI" id="CHEBI:29985"/>
        <dbReference type="ChEBI" id="CHEBI:58514"/>
        <dbReference type="ChEBI" id="CHEBI:58520"/>
        <dbReference type="EC" id="2.6.1.81"/>
    </reaction>
</comment>
<comment type="cofactor">
    <cofactor evidence="1">
        <name>pyridoxal 5'-phosphate</name>
        <dbReference type="ChEBI" id="CHEBI:597326"/>
    </cofactor>
</comment>
<comment type="pathway">
    <text evidence="1">Amino-acid degradation; L-arginine degradation via AST pathway; L-glutamate and succinate from L-arginine: step 3/5.</text>
</comment>
<comment type="similarity">
    <text evidence="1">Belongs to the class-III pyridoxal-phosphate-dependent aminotransferase family. AstC subfamily.</text>
</comment>
<sequence length="408" mass="43747">MSLSVTRENFDEWMVPVYVPAPLIPVRGEGSRLWDQQGKEYIDFAGGIAVNALGHAHPALREALNEQANRFWHTGNGYTNEPALRLAKKLIDATFAERVFFCNSGAEANEAALKLARKYAHDRVGNHKSGIVAFKNAFHGRTLFTVSAGGQPTYSQDFAPLPPDIRHAAYNDLNSASALIDDNTCAVIVEPVQGEGGVIPATKAFLQGLRELCDRHQALLIFDEVQTGVGRTGKLYAYMHYGVTPDILTTAKALGGGFPIGAMLTTQDYASVMTPGTHGTTYGGNPLATAVAGKVLDIINTPEMQNGVRQRHDAFIERLNTLNVRFGMFSEIRGLGLLLGCVLQTEFAGKAKLIAQEAAKAGVMVLIAGGDVVRFAPALNVSDEEIATGLDRFALACERLQTGGASCG</sequence>